<reference key="1">
    <citation type="journal article" date="2009" name="J. Bacteriol.">
        <title>Complete and draft genome sequences of six members of the Aquificales.</title>
        <authorList>
            <person name="Reysenbach A.-L."/>
            <person name="Hamamura N."/>
            <person name="Podar M."/>
            <person name="Griffiths E."/>
            <person name="Ferreira S."/>
            <person name="Hochstein R."/>
            <person name="Heidelberg J."/>
            <person name="Johnson J."/>
            <person name="Mead D."/>
            <person name="Pohorille A."/>
            <person name="Sarmiento M."/>
            <person name="Schweighofer K."/>
            <person name="Seshadri R."/>
            <person name="Voytek M.A."/>
        </authorList>
    </citation>
    <scope>NUCLEOTIDE SEQUENCE [LARGE SCALE GENOMIC DNA]</scope>
    <source>
        <strain>Y04AAS1</strain>
    </source>
</reference>
<feature type="chain" id="PRO_0000354602" description="Large ribosomal subunit protein uL16">
    <location>
        <begin position="1"/>
        <end position="141"/>
    </location>
</feature>
<proteinExistence type="inferred from homology"/>
<accession>B4U751</accession>
<protein>
    <recommendedName>
        <fullName evidence="1">Large ribosomal subunit protein uL16</fullName>
    </recommendedName>
    <alternativeName>
        <fullName evidence="2">50S ribosomal protein L16</fullName>
    </alternativeName>
</protein>
<dbReference type="EMBL" id="CP001130">
    <property type="protein sequence ID" value="ACG56962.1"/>
    <property type="molecule type" value="Genomic_DNA"/>
</dbReference>
<dbReference type="RefSeq" id="WP_012513318.1">
    <property type="nucleotide sequence ID" value="NC_011126.1"/>
</dbReference>
<dbReference type="SMR" id="B4U751"/>
<dbReference type="STRING" id="380749.HY04AAS1_0272"/>
<dbReference type="KEGG" id="hya:HY04AAS1_0272"/>
<dbReference type="eggNOG" id="COG0197">
    <property type="taxonomic scope" value="Bacteria"/>
</dbReference>
<dbReference type="HOGENOM" id="CLU_078858_2_1_0"/>
<dbReference type="OrthoDB" id="9802589at2"/>
<dbReference type="GO" id="GO:0022625">
    <property type="term" value="C:cytosolic large ribosomal subunit"/>
    <property type="evidence" value="ECO:0007669"/>
    <property type="project" value="TreeGrafter"/>
</dbReference>
<dbReference type="GO" id="GO:0019843">
    <property type="term" value="F:rRNA binding"/>
    <property type="evidence" value="ECO:0007669"/>
    <property type="project" value="UniProtKB-UniRule"/>
</dbReference>
<dbReference type="GO" id="GO:0003735">
    <property type="term" value="F:structural constituent of ribosome"/>
    <property type="evidence" value="ECO:0007669"/>
    <property type="project" value="InterPro"/>
</dbReference>
<dbReference type="GO" id="GO:0000049">
    <property type="term" value="F:tRNA binding"/>
    <property type="evidence" value="ECO:0007669"/>
    <property type="project" value="UniProtKB-KW"/>
</dbReference>
<dbReference type="GO" id="GO:0006412">
    <property type="term" value="P:translation"/>
    <property type="evidence" value="ECO:0007669"/>
    <property type="project" value="UniProtKB-UniRule"/>
</dbReference>
<dbReference type="CDD" id="cd01433">
    <property type="entry name" value="Ribosomal_L16_L10e"/>
    <property type="match status" value="1"/>
</dbReference>
<dbReference type="FunFam" id="3.90.1170.10:FF:000001">
    <property type="entry name" value="50S ribosomal protein L16"/>
    <property type="match status" value="1"/>
</dbReference>
<dbReference type="Gene3D" id="3.90.1170.10">
    <property type="entry name" value="Ribosomal protein L10e/L16"/>
    <property type="match status" value="1"/>
</dbReference>
<dbReference type="HAMAP" id="MF_01342">
    <property type="entry name" value="Ribosomal_uL16"/>
    <property type="match status" value="1"/>
</dbReference>
<dbReference type="InterPro" id="IPR047873">
    <property type="entry name" value="Ribosomal_uL16"/>
</dbReference>
<dbReference type="InterPro" id="IPR000114">
    <property type="entry name" value="Ribosomal_uL16_bact-type"/>
</dbReference>
<dbReference type="InterPro" id="IPR016180">
    <property type="entry name" value="Ribosomal_uL16_dom"/>
</dbReference>
<dbReference type="InterPro" id="IPR036920">
    <property type="entry name" value="Ribosomal_uL16_sf"/>
</dbReference>
<dbReference type="NCBIfam" id="TIGR01164">
    <property type="entry name" value="rplP_bact"/>
    <property type="match status" value="1"/>
</dbReference>
<dbReference type="PANTHER" id="PTHR12220">
    <property type="entry name" value="50S/60S RIBOSOMAL PROTEIN L16"/>
    <property type="match status" value="1"/>
</dbReference>
<dbReference type="PANTHER" id="PTHR12220:SF13">
    <property type="entry name" value="LARGE RIBOSOMAL SUBUNIT PROTEIN UL16M"/>
    <property type="match status" value="1"/>
</dbReference>
<dbReference type="Pfam" id="PF00252">
    <property type="entry name" value="Ribosomal_L16"/>
    <property type="match status" value="1"/>
</dbReference>
<dbReference type="PRINTS" id="PR00060">
    <property type="entry name" value="RIBOSOMALL16"/>
</dbReference>
<dbReference type="SUPFAM" id="SSF54686">
    <property type="entry name" value="Ribosomal protein L16p/L10e"/>
    <property type="match status" value="1"/>
</dbReference>
<keyword id="KW-0687">Ribonucleoprotein</keyword>
<keyword id="KW-0689">Ribosomal protein</keyword>
<keyword id="KW-0694">RNA-binding</keyword>
<keyword id="KW-0699">rRNA-binding</keyword>
<keyword id="KW-0820">tRNA-binding</keyword>
<comment type="function">
    <text evidence="1">Binds 23S rRNA and is also seen to make contacts with the A and possibly P site tRNAs.</text>
</comment>
<comment type="subunit">
    <text evidence="1">Part of the 50S ribosomal subunit.</text>
</comment>
<comment type="similarity">
    <text evidence="1">Belongs to the universal ribosomal protein uL16 family.</text>
</comment>
<gene>
    <name evidence="1" type="primary">rplP</name>
    <name type="ordered locus">HY04AAS1_0272</name>
</gene>
<organism>
    <name type="scientific">Hydrogenobaculum sp. (strain Y04AAS1)</name>
    <dbReference type="NCBI Taxonomy" id="380749"/>
    <lineage>
        <taxon>Bacteria</taxon>
        <taxon>Pseudomonadati</taxon>
        <taxon>Aquificota</taxon>
        <taxon>Aquificia</taxon>
        <taxon>Aquificales</taxon>
        <taxon>Aquificaceae</taxon>
        <taxon>Hydrogenobaculum</taxon>
    </lineage>
</organism>
<name>RL16_HYDS0</name>
<evidence type="ECO:0000255" key="1">
    <source>
        <dbReference type="HAMAP-Rule" id="MF_01342"/>
    </source>
</evidence>
<evidence type="ECO:0000305" key="2"/>
<sequence length="141" mass="15855">MSFLQPSRQKYRKTQRGTLKGKSFRGNQVAFGEYGIQALESHWITQRQIEASRIALVRSLRKGTKVWIRIFPDKPYTKKPAEVRGGGGKGDPEGYVAVVKPGRIMFEFSDVPQDMAEEAFRKVSAKLPIKVRLVKAGGMSI</sequence>